<sequence length="21" mass="2424">SLVQFEKMIKEVAGKNGVPWY</sequence>
<protein>
    <recommendedName>
        <fullName>Phospholipase A2 crotoxin basic chain</fullName>
        <shortName>CB</shortName>
        <shortName>svPLA2</shortName>
        <ecNumber>3.1.1.4</ecNumber>
    </recommendedName>
    <alternativeName>
        <fullName>Cdcum6</fullName>
    </alternativeName>
    <alternativeName>
        <fullName>Phosphatidylcholine 2-acylhydrolase</fullName>
    </alternativeName>
</protein>
<proteinExistence type="evidence at protein level"/>
<feature type="chain" id="PRO_0000376918" description="Phospholipase A2 crotoxin basic chain">
    <location>
        <begin position="1"/>
        <end position="21" status="greater than"/>
    </location>
</feature>
<feature type="non-terminal residue">
    <location>
        <position position="21"/>
    </location>
</feature>
<comment type="function">
    <text evidence="3">Snake venom phospholipase A2 (PLA2) that induces a conspicuous local myotoxic effect and moderate footpad edema. In vitro, it shows anticoagulant effects and is not cytotoxic on myoblast but is able to lyse myotubes. PLA2 catalyzes the calcium-dependent hydrolysis of the 2-acyl groups in 3-sn-phosphoglycerides.</text>
</comment>
<comment type="catalytic activity">
    <reaction evidence="1 2">
        <text>a 1,2-diacyl-sn-glycero-3-phosphocholine + H2O = a 1-acyl-sn-glycero-3-phosphocholine + a fatty acid + H(+)</text>
        <dbReference type="Rhea" id="RHEA:15801"/>
        <dbReference type="ChEBI" id="CHEBI:15377"/>
        <dbReference type="ChEBI" id="CHEBI:15378"/>
        <dbReference type="ChEBI" id="CHEBI:28868"/>
        <dbReference type="ChEBI" id="CHEBI:57643"/>
        <dbReference type="ChEBI" id="CHEBI:58168"/>
        <dbReference type="EC" id="3.1.1.4"/>
    </reaction>
</comment>
<comment type="cofactor">
    <cofactor evidence="3">
        <name>Ca(2+)</name>
        <dbReference type="ChEBI" id="CHEBI:29108"/>
    </cofactor>
    <text evidence="3">Binds 1 Ca(2+) ion.</text>
</comment>
<comment type="biophysicochemical properties">
    <kinetics>
        <KM evidence="3">6 mM for 4-nitro-3-(octanoyloxy)benzoic acid</KM>
        <Vmax evidence="3">3.44 nmol/min/mg enzyme</Vmax>
    </kinetics>
    <phDependence>
        <text evidence="3">Optimum pH is 8.0.</text>
    </phDependence>
    <temperatureDependence>
        <text evidence="3">Optimum temperature is 30-45 degrees Celsius.</text>
    </temperatureDependence>
</comment>
<comment type="subcellular location">
    <subcellularLocation>
        <location>Secreted</location>
    </subcellularLocation>
</comment>
<comment type="tissue specificity">
    <text>Expressed by the venom gland.</text>
</comment>
<comment type="mass spectrometry" mass="14321.98" method="MALDI" evidence="3"/>
<comment type="toxic dose">
    <text>LD(50) is &gt; 0.245 mg/kg by intraperitoneal injection into mice.</text>
</comment>
<comment type="similarity">
    <text evidence="4">Belongs to the phospholipase A2 family. Group II subfamily.</text>
</comment>
<dbReference type="EC" id="3.1.1.4"/>
<dbReference type="GO" id="GO:0005576">
    <property type="term" value="C:extracellular region"/>
    <property type="evidence" value="ECO:0007669"/>
    <property type="project" value="UniProtKB-SubCell"/>
</dbReference>
<dbReference type="GO" id="GO:0046872">
    <property type="term" value="F:metal ion binding"/>
    <property type="evidence" value="ECO:0007669"/>
    <property type="project" value="UniProtKB-KW"/>
</dbReference>
<dbReference type="GO" id="GO:0004623">
    <property type="term" value="F:phospholipase A2 activity"/>
    <property type="evidence" value="ECO:0007669"/>
    <property type="project" value="UniProtKB-EC"/>
</dbReference>
<dbReference type="GO" id="GO:0090729">
    <property type="term" value="F:toxin activity"/>
    <property type="evidence" value="ECO:0007669"/>
    <property type="project" value="UniProtKB-KW"/>
</dbReference>
<dbReference type="GO" id="GO:0016042">
    <property type="term" value="P:lipid catabolic process"/>
    <property type="evidence" value="ECO:0007669"/>
    <property type="project" value="UniProtKB-KW"/>
</dbReference>
<reference key="1">
    <citation type="journal article" date="2009" name="Toxicon">
        <title>Biochemical and biological characterization of a PLA2 from crotoxin complex of Crotalus durissus cumanensis.</title>
        <authorList>
            <person name="Pereanez J.A."/>
            <person name="Nunez V."/>
            <person name="Huancahuire-Vega S."/>
            <person name="Marangoni S."/>
            <person name="Ponce-Soto L.A."/>
        </authorList>
    </citation>
    <scope>PROTEIN SEQUENCE</scope>
    <scope>FUNCTION</scope>
    <scope>COFACTOR</scope>
    <scope>MASS SPECTROMETRY</scope>
    <scope>BIOPHYSICOCHEMICAL PROPERTIES</scope>
    <source>
        <tissue>Venom</tissue>
    </source>
</reference>
<evidence type="ECO:0000255" key="1">
    <source>
        <dbReference type="PROSITE-ProRule" id="PRU10035"/>
    </source>
</evidence>
<evidence type="ECO:0000255" key="2">
    <source>
        <dbReference type="PROSITE-ProRule" id="PRU10036"/>
    </source>
</evidence>
<evidence type="ECO:0000269" key="3">
    <source>
    </source>
</evidence>
<evidence type="ECO:0000305" key="4"/>
<keyword id="KW-1203">Blood coagulation cascade inhibiting toxin</keyword>
<keyword id="KW-0106">Calcium</keyword>
<keyword id="KW-0903">Direct protein sequencing</keyword>
<keyword id="KW-1199">Hemostasis impairing toxin</keyword>
<keyword id="KW-0378">Hydrolase</keyword>
<keyword id="KW-0442">Lipid degradation</keyword>
<keyword id="KW-0443">Lipid metabolism</keyword>
<keyword id="KW-0479">Metal-binding</keyword>
<keyword id="KW-0528">Neurotoxin</keyword>
<keyword id="KW-0638">Presynaptic neurotoxin</keyword>
<keyword id="KW-0964">Secreted</keyword>
<keyword id="KW-0800">Toxin</keyword>
<name>PA2B6_CRODM</name>
<accession>P0CAS1</accession>
<organism>
    <name type="scientific">Crotalus durissus cumanensis</name>
    <name type="common">South American rattlesnake</name>
    <dbReference type="NCBI Taxonomy" id="184542"/>
    <lineage>
        <taxon>Eukaryota</taxon>
        <taxon>Metazoa</taxon>
        <taxon>Chordata</taxon>
        <taxon>Craniata</taxon>
        <taxon>Vertebrata</taxon>
        <taxon>Euteleostomi</taxon>
        <taxon>Lepidosauria</taxon>
        <taxon>Squamata</taxon>
        <taxon>Bifurcata</taxon>
        <taxon>Unidentata</taxon>
        <taxon>Episquamata</taxon>
        <taxon>Toxicofera</taxon>
        <taxon>Serpentes</taxon>
        <taxon>Colubroidea</taxon>
        <taxon>Viperidae</taxon>
        <taxon>Crotalinae</taxon>
        <taxon>Crotalus</taxon>
    </lineage>
</organism>